<comment type="function">
    <text evidence="1">Endoribonuclease that initiates mRNA decay.</text>
</comment>
<comment type="subcellular location">
    <subcellularLocation>
        <location evidence="1">Cell membrane</location>
        <topology evidence="1">Single-pass membrane protein</topology>
    </subcellularLocation>
</comment>
<comment type="similarity">
    <text evidence="1">Belongs to the RNase Y family.</text>
</comment>
<keyword id="KW-1003">Cell membrane</keyword>
<keyword id="KW-0255">Endonuclease</keyword>
<keyword id="KW-0378">Hydrolase</keyword>
<keyword id="KW-0472">Membrane</keyword>
<keyword id="KW-0540">Nuclease</keyword>
<keyword id="KW-1185">Reference proteome</keyword>
<keyword id="KW-0694">RNA-binding</keyword>
<keyword id="KW-0812">Transmembrane</keyword>
<keyword id="KW-1133">Transmembrane helix</keyword>
<proteinExistence type="inferred from homology"/>
<feature type="chain" id="PRO_0000344901" description="Ribonuclease Y">
    <location>
        <begin position="1"/>
        <end position="520"/>
    </location>
</feature>
<feature type="transmembrane region" description="Helical" evidence="1">
    <location>
        <begin position="3"/>
        <end position="23"/>
    </location>
</feature>
<feature type="domain" description="KH" evidence="1">
    <location>
        <begin position="209"/>
        <end position="272"/>
    </location>
</feature>
<feature type="domain" description="HD" evidence="2">
    <location>
        <begin position="335"/>
        <end position="429"/>
    </location>
</feature>
<dbReference type="EC" id="3.1.-.-" evidence="1"/>
<dbReference type="EMBL" id="AM180252">
    <property type="protein sequence ID" value="CAJ54856.1"/>
    <property type="molecule type" value="Genomic_DNA"/>
</dbReference>
<dbReference type="RefSeq" id="WP_011526885.1">
    <property type="nucleotide sequence ID" value="NC_008011.1"/>
</dbReference>
<dbReference type="SMR" id="Q1MQ71"/>
<dbReference type="STRING" id="363253.LI0802"/>
<dbReference type="KEGG" id="lip:LI0802"/>
<dbReference type="eggNOG" id="COG1418">
    <property type="taxonomic scope" value="Bacteria"/>
</dbReference>
<dbReference type="HOGENOM" id="CLU_028328_1_0_7"/>
<dbReference type="OrthoDB" id="9803205at2"/>
<dbReference type="Proteomes" id="UP000002430">
    <property type="component" value="Chromosome"/>
</dbReference>
<dbReference type="GO" id="GO:0005886">
    <property type="term" value="C:plasma membrane"/>
    <property type="evidence" value="ECO:0007669"/>
    <property type="project" value="UniProtKB-SubCell"/>
</dbReference>
<dbReference type="GO" id="GO:0003723">
    <property type="term" value="F:RNA binding"/>
    <property type="evidence" value="ECO:0007669"/>
    <property type="project" value="UniProtKB-UniRule"/>
</dbReference>
<dbReference type="GO" id="GO:0004521">
    <property type="term" value="F:RNA endonuclease activity"/>
    <property type="evidence" value="ECO:0007669"/>
    <property type="project" value="UniProtKB-UniRule"/>
</dbReference>
<dbReference type="GO" id="GO:0006402">
    <property type="term" value="P:mRNA catabolic process"/>
    <property type="evidence" value="ECO:0007669"/>
    <property type="project" value="UniProtKB-UniRule"/>
</dbReference>
<dbReference type="CDD" id="cd00077">
    <property type="entry name" value="HDc"/>
    <property type="match status" value="1"/>
</dbReference>
<dbReference type="CDD" id="cd22431">
    <property type="entry name" value="KH-I_RNaseY"/>
    <property type="match status" value="1"/>
</dbReference>
<dbReference type="FunFam" id="1.10.3210.10:FF:000022">
    <property type="entry name" value="Ribonuclease Y"/>
    <property type="match status" value="1"/>
</dbReference>
<dbReference type="Gene3D" id="3.30.310.210">
    <property type="match status" value="1"/>
</dbReference>
<dbReference type="Gene3D" id="1.10.3210.10">
    <property type="entry name" value="Hypothetical protein af1432"/>
    <property type="match status" value="1"/>
</dbReference>
<dbReference type="HAMAP" id="MF_00335">
    <property type="entry name" value="RNase_Y"/>
    <property type="match status" value="1"/>
</dbReference>
<dbReference type="InterPro" id="IPR003607">
    <property type="entry name" value="HD/PDEase_dom"/>
</dbReference>
<dbReference type="InterPro" id="IPR006674">
    <property type="entry name" value="HD_domain"/>
</dbReference>
<dbReference type="InterPro" id="IPR006675">
    <property type="entry name" value="HDIG_dom"/>
</dbReference>
<dbReference type="InterPro" id="IPR004087">
    <property type="entry name" value="KH_dom"/>
</dbReference>
<dbReference type="InterPro" id="IPR004088">
    <property type="entry name" value="KH_dom_type_1"/>
</dbReference>
<dbReference type="InterPro" id="IPR036612">
    <property type="entry name" value="KH_dom_type_1_sf"/>
</dbReference>
<dbReference type="InterPro" id="IPR017705">
    <property type="entry name" value="Ribonuclease_Y"/>
</dbReference>
<dbReference type="InterPro" id="IPR022711">
    <property type="entry name" value="RNase_Y_N"/>
</dbReference>
<dbReference type="NCBIfam" id="TIGR00277">
    <property type="entry name" value="HDIG"/>
    <property type="match status" value="1"/>
</dbReference>
<dbReference type="NCBIfam" id="TIGR03319">
    <property type="entry name" value="RNase_Y"/>
    <property type="match status" value="1"/>
</dbReference>
<dbReference type="PANTHER" id="PTHR12826">
    <property type="entry name" value="RIBONUCLEASE Y"/>
    <property type="match status" value="1"/>
</dbReference>
<dbReference type="PANTHER" id="PTHR12826:SF15">
    <property type="entry name" value="RIBONUCLEASE Y"/>
    <property type="match status" value="1"/>
</dbReference>
<dbReference type="Pfam" id="PF01966">
    <property type="entry name" value="HD"/>
    <property type="match status" value="1"/>
</dbReference>
<dbReference type="Pfam" id="PF00013">
    <property type="entry name" value="KH_1"/>
    <property type="match status" value="1"/>
</dbReference>
<dbReference type="Pfam" id="PF12072">
    <property type="entry name" value="RNase_Y_N"/>
    <property type="match status" value="1"/>
</dbReference>
<dbReference type="SMART" id="SM00471">
    <property type="entry name" value="HDc"/>
    <property type="match status" value="1"/>
</dbReference>
<dbReference type="SMART" id="SM00322">
    <property type="entry name" value="KH"/>
    <property type="match status" value="1"/>
</dbReference>
<dbReference type="SUPFAM" id="SSF54791">
    <property type="entry name" value="Eukaryotic type KH-domain (KH-domain type I)"/>
    <property type="match status" value="1"/>
</dbReference>
<dbReference type="SUPFAM" id="SSF109604">
    <property type="entry name" value="HD-domain/PDEase-like"/>
    <property type="match status" value="1"/>
</dbReference>
<dbReference type="PROSITE" id="PS51831">
    <property type="entry name" value="HD"/>
    <property type="match status" value="1"/>
</dbReference>
<dbReference type="PROSITE" id="PS50084">
    <property type="entry name" value="KH_TYPE_1"/>
    <property type="match status" value="1"/>
</dbReference>
<protein>
    <recommendedName>
        <fullName evidence="1">Ribonuclease Y</fullName>
        <shortName evidence="1">RNase Y</shortName>
        <ecNumber evidence="1">3.1.-.-</ecNumber>
    </recommendedName>
</protein>
<gene>
    <name evidence="1" type="primary">rny</name>
    <name type="ordered locus">LI0802</name>
</gene>
<name>RNY_LAWIP</name>
<reference key="1">
    <citation type="submission" date="2005-11" db="EMBL/GenBank/DDBJ databases">
        <title>The complete genome sequence of Lawsonia intracellularis: the causative agent of proliferative enteropathy.</title>
        <authorList>
            <person name="Kaur K."/>
            <person name="Zhang Q."/>
            <person name="Beckler D."/>
            <person name="Munir S."/>
            <person name="Li L."/>
            <person name="Kinsley K."/>
            <person name="Herron L."/>
            <person name="Peterson A."/>
            <person name="May B."/>
            <person name="Singh S."/>
            <person name="Gebhart C."/>
            <person name="Kapur V."/>
        </authorList>
    </citation>
    <scope>NUCLEOTIDE SEQUENCE [LARGE SCALE GENOMIC DNA]</scope>
    <source>
        <strain>PHE/MN1-00</strain>
    </source>
</reference>
<sequence length="520" mass="58605">MSFILVLCTVSSLFVGGGTGIFLYKKVSKKYIGDAKELAIRIVEEARKEGQAQKKEILLQGQNEIFNQKKEFEFDFKQREKELSIKDKKLQVQSERLEERLERAAEKEHEILKVEKELSIKERNLLTLEEQLKSRIDEQEKQLQKISGLTVEEAKQSLFEEVKNRSRHESAKMMRLIEAEAVETANRKAKEIIANAIQRYAGDYVSEHTVTAVTLPSEDMKGRIIGREGRNIRALESATGVDFIIDDTPETVVLSAYSPMRRQVAKMALERLIQDGRIHPARIEEIVRKCEEDLAIQVREIGEQATFDIGVYGIHPELIRILGQLNYRTSYTQNVLRHSIEVASLCGMMAAELGVDIKKAKRAGLLHDIGKAVDHEVEGSHAIIGAELAKKFNETEEIVHAIEAHHEEKGKPETALAILVQASDCLSGARPGARLELLESYVKRLEHLENIAGEFEGVSKAYAIQAGREVRVMVDADSIGDDQTYLLCKDIAGRIEESLTYPGQIRVTVIREHRAVGYAK</sequence>
<evidence type="ECO:0000255" key="1">
    <source>
        <dbReference type="HAMAP-Rule" id="MF_00335"/>
    </source>
</evidence>
<evidence type="ECO:0000255" key="2">
    <source>
        <dbReference type="PROSITE-ProRule" id="PRU01175"/>
    </source>
</evidence>
<organism>
    <name type="scientific">Lawsonia intracellularis (strain PHE/MN1-00)</name>
    <dbReference type="NCBI Taxonomy" id="363253"/>
    <lineage>
        <taxon>Bacteria</taxon>
        <taxon>Pseudomonadati</taxon>
        <taxon>Thermodesulfobacteriota</taxon>
        <taxon>Desulfovibrionia</taxon>
        <taxon>Desulfovibrionales</taxon>
        <taxon>Desulfovibrionaceae</taxon>
        <taxon>Lawsonia</taxon>
    </lineage>
</organism>
<accession>Q1MQ71</accession>